<name>Y795_TREPA</name>
<keyword id="KW-1185">Reference proteome</keyword>
<dbReference type="EMBL" id="AE000520">
    <property type="protein sequence ID" value="AAC65767.1"/>
    <property type="molecule type" value="Genomic_DNA"/>
</dbReference>
<dbReference type="PIR" id="B71281">
    <property type="entry name" value="B71281"/>
</dbReference>
<dbReference type="SMR" id="O83773"/>
<dbReference type="IntAct" id="O83773">
    <property type="interactions" value="18"/>
</dbReference>
<dbReference type="EnsemblBacteria" id="AAC65767">
    <property type="protein sequence ID" value="AAC65767"/>
    <property type="gene ID" value="TP_0795"/>
</dbReference>
<dbReference type="KEGG" id="tpa:TP_0795"/>
<dbReference type="KEGG" id="tpw:TPANIC_0795"/>
<dbReference type="HOGENOM" id="CLU_3085909_0_0_12"/>
<dbReference type="Proteomes" id="UP000000811">
    <property type="component" value="Chromosome"/>
</dbReference>
<protein>
    <recommendedName>
        <fullName>Uncharacterized protein TP_0795</fullName>
    </recommendedName>
</protein>
<organism>
    <name type="scientific">Treponema pallidum (strain Nichols)</name>
    <dbReference type="NCBI Taxonomy" id="243276"/>
    <lineage>
        <taxon>Bacteria</taxon>
        <taxon>Pseudomonadati</taxon>
        <taxon>Spirochaetota</taxon>
        <taxon>Spirochaetia</taxon>
        <taxon>Spirochaetales</taxon>
        <taxon>Treponemataceae</taxon>
        <taxon>Treponema</taxon>
    </lineage>
</organism>
<proteinExistence type="predicted"/>
<accession>O83773</accession>
<sequence>MHSTPLVSAALIFAYTLTSDRTPAHASCTHTMMRTVRHTFLHTNSTRAVLTL</sequence>
<gene>
    <name type="ordered locus">TP_0795</name>
</gene>
<feature type="chain" id="PRO_0000202328" description="Uncharacterized protein TP_0795">
    <location>
        <begin position="1"/>
        <end position="52"/>
    </location>
</feature>
<reference key="1">
    <citation type="journal article" date="1998" name="Science">
        <title>Complete genome sequence of Treponema pallidum, the syphilis spirochete.</title>
        <authorList>
            <person name="Fraser C.M."/>
            <person name="Norris S.J."/>
            <person name="Weinstock G.M."/>
            <person name="White O."/>
            <person name="Sutton G.G."/>
            <person name="Dodson R.J."/>
            <person name="Gwinn M.L."/>
            <person name="Hickey E.K."/>
            <person name="Clayton R.A."/>
            <person name="Ketchum K.A."/>
            <person name="Sodergren E."/>
            <person name="Hardham J.M."/>
            <person name="McLeod M.P."/>
            <person name="Salzberg S.L."/>
            <person name="Peterson J.D."/>
            <person name="Khalak H.G."/>
            <person name="Richardson D.L."/>
            <person name="Howell J.K."/>
            <person name="Chidambaram M."/>
            <person name="Utterback T.R."/>
            <person name="McDonald L.A."/>
            <person name="Artiach P."/>
            <person name="Bowman C."/>
            <person name="Cotton M.D."/>
            <person name="Fujii C."/>
            <person name="Garland S.A."/>
            <person name="Hatch B."/>
            <person name="Horst K."/>
            <person name="Roberts K.M."/>
            <person name="Sandusky M."/>
            <person name="Weidman J.F."/>
            <person name="Smith H.O."/>
            <person name="Venter J.C."/>
        </authorList>
    </citation>
    <scope>NUCLEOTIDE SEQUENCE [LARGE SCALE GENOMIC DNA]</scope>
    <source>
        <strain>Nichols</strain>
    </source>
</reference>